<comment type="function">
    <text evidence="1">One of several proteins that assist in the late maturation steps of the functional core of the 30S ribosomal subunit. Associates with free 30S ribosomal subunits (but not with 30S subunits that are part of 70S ribosomes or polysomes). Required for efficient processing of 16S rRNA. May interact with the 5'-terminal helix region of 16S rRNA.</text>
</comment>
<comment type="subunit">
    <text evidence="1">Monomer. Binds 30S ribosomal subunits, but not 50S ribosomal subunits or 70S ribosomes.</text>
</comment>
<comment type="subcellular location">
    <subcellularLocation>
        <location evidence="1">Cytoplasm</location>
    </subcellularLocation>
</comment>
<comment type="similarity">
    <text evidence="1">Belongs to the RbfA family.</text>
</comment>
<comment type="sequence caution" evidence="3">
    <conflict type="erroneous initiation">
        <sequence resource="EMBL-CDS" id="ACI51831"/>
    </conflict>
    <text>Extended N-terminus.</text>
</comment>
<accession>A9HF21</accession>
<accession>B5ZDK1</accession>
<organism>
    <name type="scientific">Gluconacetobacter diazotrophicus (strain ATCC 49037 / DSM 5601 / CCUG 37298 / CIP 103539 / LMG 7603 / PAl5)</name>
    <dbReference type="NCBI Taxonomy" id="272568"/>
    <lineage>
        <taxon>Bacteria</taxon>
        <taxon>Pseudomonadati</taxon>
        <taxon>Pseudomonadota</taxon>
        <taxon>Alphaproteobacteria</taxon>
        <taxon>Acetobacterales</taxon>
        <taxon>Acetobacteraceae</taxon>
        <taxon>Gluconacetobacter</taxon>
    </lineage>
</organism>
<dbReference type="EMBL" id="AM889285">
    <property type="protein sequence ID" value="CAP55309.1"/>
    <property type="molecule type" value="Genomic_DNA"/>
</dbReference>
<dbReference type="EMBL" id="CP001189">
    <property type="protein sequence ID" value="ACI51831.1"/>
    <property type="status" value="ALT_INIT"/>
    <property type="molecule type" value="Genomic_DNA"/>
</dbReference>
<dbReference type="SMR" id="A9HF21"/>
<dbReference type="STRING" id="272568.GDI1366"/>
<dbReference type="KEGG" id="gdi:GDI1366"/>
<dbReference type="KEGG" id="gdj:Gdia_2071"/>
<dbReference type="eggNOG" id="COG0858">
    <property type="taxonomic scope" value="Bacteria"/>
</dbReference>
<dbReference type="HOGENOM" id="CLU_089475_1_0_5"/>
<dbReference type="Proteomes" id="UP000001176">
    <property type="component" value="Chromosome"/>
</dbReference>
<dbReference type="GO" id="GO:0005829">
    <property type="term" value="C:cytosol"/>
    <property type="evidence" value="ECO:0007669"/>
    <property type="project" value="TreeGrafter"/>
</dbReference>
<dbReference type="GO" id="GO:0043024">
    <property type="term" value="F:ribosomal small subunit binding"/>
    <property type="evidence" value="ECO:0007669"/>
    <property type="project" value="TreeGrafter"/>
</dbReference>
<dbReference type="GO" id="GO:0030490">
    <property type="term" value="P:maturation of SSU-rRNA"/>
    <property type="evidence" value="ECO:0007669"/>
    <property type="project" value="UniProtKB-UniRule"/>
</dbReference>
<dbReference type="Gene3D" id="3.30.300.20">
    <property type="match status" value="1"/>
</dbReference>
<dbReference type="HAMAP" id="MF_00003">
    <property type="entry name" value="RbfA"/>
    <property type="match status" value="1"/>
</dbReference>
<dbReference type="InterPro" id="IPR015946">
    <property type="entry name" value="KH_dom-like_a/b"/>
</dbReference>
<dbReference type="InterPro" id="IPR000238">
    <property type="entry name" value="RbfA"/>
</dbReference>
<dbReference type="InterPro" id="IPR023799">
    <property type="entry name" value="RbfA_dom_sf"/>
</dbReference>
<dbReference type="InterPro" id="IPR020053">
    <property type="entry name" value="Ribosome-bd_factorA_CS"/>
</dbReference>
<dbReference type="NCBIfam" id="NF001802">
    <property type="entry name" value="PRK00521.2-5"/>
    <property type="match status" value="1"/>
</dbReference>
<dbReference type="NCBIfam" id="TIGR00082">
    <property type="entry name" value="rbfA"/>
    <property type="match status" value="1"/>
</dbReference>
<dbReference type="PANTHER" id="PTHR33515">
    <property type="entry name" value="RIBOSOME-BINDING FACTOR A, CHLOROPLASTIC-RELATED"/>
    <property type="match status" value="1"/>
</dbReference>
<dbReference type="PANTHER" id="PTHR33515:SF1">
    <property type="entry name" value="RIBOSOME-BINDING FACTOR A, CHLOROPLASTIC-RELATED"/>
    <property type="match status" value="1"/>
</dbReference>
<dbReference type="Pfam" id="PF02033">
    <property type="entry name" value="RBFA"/>
    <property type="match status" value="1"/>
</dbReference>
<dbReference type="SUPFAM" id="SSF89919">
    <property type="entry name" value="Ribosome-binding factor A, RbfA"/>
    <property type="match status" value="1"/>
</dbReference>
<dbReference type="PROSITE" id="PS01319">
    <property type="entry name" value="RBFA"/>
    <property type="match status" value="1"/>
</dbReference>
<gene>
    <name evidence="1" type="primary">rbfA</name>
    <name type="ordered locus">GDI1366</name>
    <name type="ordered locus">Gdia_2071</name>
</gene>
<name>RBFA_GLUDA</name>
<proteinExistence type="inferred from homology"/>
<keyword id="KW-0963">Cytoplasm</keyword>
<keyword id="KW-1185">Reference proteome</keyword>
<keyword id="KW-0690">Ribosome biogenesis</keyword>
<sequence length="136" mass="15066">MNTAGPAGKLAGHAASGPTQRQLRVGEEVRRMLADLFARTEFRDPELVDVRITVTEVRISPDLKHATAFVARLGRSDVETLLPALKRVAPFLRSRLSTGLRLRGVPEIHFQPDTALDYAMEVDALLRQPDVARDLD</sequence>
<reference key="1">
    <citation type="journal article" date="2009" name="BMC Genomics">
        <title>Complete genome sequence of the sugarcane nitrogen-fixing endophyte Gluconacetobacter diazotrophicus Pal5.</title>
        <authorList>
            <person name="Bertalan M."/>
            <person name="Albano R."/>
            <person name="de Padua V."/>
            <person name="Rouws L."/>
            <person name="Rojas C."/>
            <person name="Hemerly A."/>
            <person name="Teixeira K."/>
            <person name="Schwab S."/>
            <person name="Araujo J."/>
            <person name="Oliveira A."/>
            <person name="Franca L."/>
            <person name="Magalhaes V."/>
            <person name="Alqueres S."/>
            <person name="Cardoso A."/>
            <person name="Almeida W."/>
            <person name="Loureiro M.M."/>
            <person name="Nogueira E."/>
            <person name="Cidade D."/>
            <person name="Oliveira D."/>
            <person name="Simao T."/>
            <person name="Macedo J."/>
            <person name="Valadao A."/>
            <person name="Dreschsel M."/>
            <person name="Freitas F."/>
            <person name="Vidal M."/>
            <person name="Guedes H."/>
            <person name="Rodrigues E."/>
            <person name="Meneses C."/>
            <person name="Brioso P."/>
            <person name="Pozzer L."/>
            <person name="Figueiredo D."/>
            <person name="Montano H."/>
            <person name="Junior J."/>
            <person name="de Souza Filho G."/>
            <person name="Martin Quintana Flores V."/>
            <person name="Ferreira B."/>
            <person name="Branco A."/>
            <person name="Gonzalez P."/>
            <person name="Guillobel H."/>
            <person name="Lemos M."/>
            <person name="Seibel L."/>
            <person name="Macedo J."/>
            <person name="Alves-Ferreira M."/>
            <person name="Sachetto-Martins G."/>
            <person name="Coelho A."/>
            <person name="Santos E."/>
            <person name="Amaral G."/>
            <person name="Neves A."/>
            <person name="Pacheco A.B."/>
            <person name="Carvalho D."/>
            <person name="Lery L."/>
            <person name="Bisch P."/>
            <person name="Rossle S.C."/>
            <person name="Urmenyi T."/>
            <person name="Rael Pereira A."/>
            <person name="Silva R."/>
            <person name="Rondinelli E."/>
            <person name="von Kruger W."/>
            <person name="Martins O."/>
            <person name="Baldani J.I."/>
            <person name="Ferreira P.C."/>
        </authorList>
    </citation>
    <scope>NUCLEOTIDE SEQUENCE [LARGE SCALE GENOMIC DNA]</scope>
    <source>
        <strain>ATCC 49037 / DSM 5601 / CCUG 37298 / CIP 103539 / LMG 7603 / PAl5</strain>
    </source>
</reference>
<reference key="2">
    <citation type="journal article" date="2010" name="Stand. Genomic Sci.">
        <title>Two genome sequences of the same bacterial strain, Gluconacetobacter diazotrophicus PAl 5, suggest a new standard in genome sequence submission.</title>
        <authorList>
            <person name="Giongo A."/>
            <person name="Tyler H.L."/>
            <person name="Zipperer U.N."/>
            <person name="Triplett E.W."/>
        </authorList>
    </citation>
    <scope>NUCLEOTIDE SEQUENCE [LARGE SCALE GENOMIC DNA]</scope>
    <source>
        <strain>ATCC 49037 / DSM 5601 / CCUG 37298 / CIP 103539 / LMG 7603 / PAl5</strain>
    </source>
</reference>
<evidence type="ECO:0000255" key="1">
    <source>
        <dbReference type="HAMAP-Rule" id="MF_00003"/>
    </source>
</evidence>
<evidence type="ECO:0000256" key="2">
    <source>
        <dbReference type="SAM" id="MobiDB-lite"/>
    </source>
</evidence>
<evidence type="ECO:0000305" key="3"/>
<protein>
    <recommendedName>
        <fullName evidence="1">Ribosome-binding factor A</fullName>
    </recommendedName>
</protein>
<feature type="chain" id="PRO_0000329328" description="Ribosome-binding factor A">
    <location>
        <begin position="1"/>
        <end position="136"/>
    </location>
</feature>
<feature type="region of interest" description="Disordered" evidence="2">
    <location>
        <begin position="1"/>
        <end position="22"/>
    </location>
</feature>